<gene>
    <name type="primary">Rpl12</name>
</gene>
<keyword id="KW-0007">Acetylation</keyword>
<keyword id="KW-0963">Cytoplasm</keyword>
<keyword id="KW-1017">Isopeptide bond</keyword>
<keyword id="KW-0597">Phosphoprotein</keyword>
<keyword id="KW-1185">Reference proteome</keyword>
<keyword id="KW-0687">Ribonucleoprotein</keyword>
<keyword id="KW-0689">Ribosomal protein</keyword>
<keyword id="KW-0694">RNA-binding</keyword>
<keyword id="KW-0832">Ubl conjugation</keyword>
<sequence length="165" mass="17846">MPPKFDPNEIKVVYLRCTGGEVGATSALAPKIGPLGLSPKKVGDDIAKATGDWKGLRITVKLTIQNRQAQIEVVPSASALIIKALKEPPRDRKKQKNIKHNGNITFDEIVNIARQMRHRSLARELSGTIKEILGTAQSVGCNVDGRHPHDIIDDINSGAVECPAS</sequence>
<feature type="chain" id="PRO_0000104458" description="Large ribosomal subunit protein uL11">
    <location>
        <begin position="1"/>
        <end position="165"/>
    </location>
</feature>
<feature type="modified residue" description="Phosphoserine" evidence="1">
    <location>
        <position position="38"/>
    </location>
</feature>
<feature type="modified residue" description="N6-acetyllysine" evidence="1">
    <location>
        <position position="54"/>
    </location>
</feature>
<feature type="modified residue" description="Phosphoserine" evidence="1">
    <location>
        <position position="165"/>
    </location>
</feature>
<feature type="cross-link" description="Glycyl lysine isopeptide (Lys-Gly) (interchain with G-Cter in SUMO2)" evidence="1">
    <location>
        <position position="40"/>
    </location>
</feature>
<feature type="cross-link" description="Glycyl lysine isopeptide (Lys-Gly) (interchain with G-Cter in ubiquitin)" evidence="1">
    <location>
        <position position="48"/>
    </location>
</feature>
<feature type="cross-link" description="Glycyl lysine isopeptide (Lys-Gly) (interchain with G-Cter in ubiquitin)" evidence="1">
    <location>
        <position position="83"/>
    </location>
</feature>
<name>RL12_RAT</name>
<reference key="1">
    <citation type="journal article" date="1990" name="Biochem. Biophys. Res. Commun.">
        <title>The primary structure of rat ribosomal protein L12.</title>
        <authorList>
            <person name="Suzuki K."/>
            <person name="Olvera J."/>
            <person name="Wool I.G."/>
        </authorList>
    </citation>
    <scope>NUCLEOTIDE SEQUENCE [MRNA]</scope>
    <scope>FUNCTION</scope>
    <source>
        <strain>Sprague-Dawley</strain>
        <tissue>Liver</tissue>
    </source>
</reference>
<comment type="function">
    <text evidence="1 2">Component of the large ribosomal subunit (By similarity). The ribosome is a large ribonucleoprotein complex responsible for the synthesis of proteins in the cell (By similarity). Binds directly to 26S ribosomal RNA (PubMed:1977388).</text>
</comment>
<comment type="subunit">
    <text evidence="1">Component of the large ribosomal subunit. Mature ribosomes consist of a small (40S) and a large (60S) subunit. The 40S subunit contains about 33 different proteins and 1 molecule of RNA (18S). The 60S subunit contains about 49 different proteins and 3 molecules of RNA (28S, 5.8S and 5S).</text>
</comment>
<comment type="subcellular location">
    <subcellularLocation>
        <location evidence="1">Cytoplasm</location>
    </subcellularLocation>
</comment>
<comment type="PTM">
    <text evidence="1">Ubiquitinated at Lys-48 and Lys-83 by RNF14 and RNF25 in response to ribosome collisions (ribosome stalling).</text>
</comment>
<comment type="similarity">
    <text evidence="3">Belongs to the universal ribosomal protein uL11 family.</text>
</comment>
<dbReference type="EMBL" id="X53504">
    <property type="protein sequence ID" value="CAA37581.1"/>
    <property type="molecule type" value="mRNA"/>
</dbReference>
<dbReference type="PIR" id="A36667">
    <property type="entry name" value="R7RT12"/>
</dbReference>
<dbReference type="RefSeq" id="NP_001102668.1">
    <property type="nucleotide sequence ID" value="NM_001109198.1"/>
</dbReference>
<dbReference type="RefSeq" id="XP_006227318.1">
    <property type="nucleotide sequence ID" value="XM_006227256.3"/>
</dbReference>
<dbReference type="RefSeq" id="XP_006256697.1">
    <property type="nucleotide sequence ID" value="XM_006256635.3"/>
</dbReference>
<dbReference type="SMR" id="P23358"/>
<dbReference type="BioGRID" id="271090">
    <property type="interactions" value="5"/>
</dbReference>
<dbReference type="BioGRID" id="3430786">
    <property type="interactions" value="1"/>
</dbReference>
<dbReference type="FunCoup" id="P23358">
    <property type="interactions" value="2342"/>
</dbReference>
<dbReference type="IntAct" id="P23358">
    <property type="interactions" value="5"/>
</dbReference>
<dbReference type="MINT" id="P23358"/>
<dbReference type="STRING" id="10116.ENSRNOP00000041462"/>
<dbReference type="CarbonylDB" id="P23358"/>
<dbReference type="iPTMnet" id="P23358"/>
<dbReference type="PhosphoSitePlus" id="P23358"/>
<dbReference type="jPOST" id="P23358"/>
<dbReference type="PaxDb" id="10116-ENSRNOP00000021725"/>
<dbReference type="Ensembl" id="ENSRNOT00000042736.2">
    <property type="protein sequence ID" value="ENSRNOP00000041462.1"/>
    <property type="gene ID" value="ENSRNOG00000028993.2"/>
</dbReference>
<dbReference type="GeneID" id="499782"/>
<dbReference type="KEGG" id="rno:499782"/>
<dbReference type="UCSC" id="RGD:1565106">
    <property type="organism name" value="rat"/>
</dbReference>
<dbReference type="AGR" id="RGD:1565106"/>
<dbReference type="AGR" id="RGD:7600399"/>
<dbReference type="CTD" id="6136"/>
<dbReference type="RGD" id="1565106">
    <property type="gene designation" value="Rpl12"/>
</dbReference>
<dbReference type="eggNOG" id="KOG0886">
    <property type="taxonomic scope" value="Eukaryota"/>
</dbReference>
<dbReference type="GeneTree" id="ENSGT00390000006922"/>
<dbReference type="HOGENOM" id="CLU_074237_5_0_1"/>
<dbReference type="InParanoid" id="P23358"/>
<dbReference type="OMA" id="QPPHDVI"/>
<dbReference type="OrthoDB" id="9550325at2759"/>
<dbReference type="PhylomeDB" id="P23358"/>
<dbReference type="TreeFam" id="TF300123"/>
<dbReference type="Reactome" id="R-RNO-156827">
    <property type="pathway name" value="L13a-mediated translational silencing of Ceruloplasmin expression"/>
</dbReference>
<dbReference type="Reactome" id="R-RNO-1799339">
    <property type="pathway name" value="SRP-dependent cotranslational protein targeting to membrane"/>
</dbReference>
<dbReference type="Reactome" id="R-RNO-6791226">
    <property type="pathway name" value="Major pathway of rRNA processing in the nucleolus and cytosol"/>
</dbReference>
<dbReference type="Reactome" id="R-RNO-72689">
    <property type="pathway name" value="Formation of a pool of free 40S subunits"/>
</dbReference>
<dbReference type="Reactome" id="R-RNO-72706">
    <property type="pathway name" value="GTP hydrolysis and joining of the 60S ribosomal subunit"/>
</dbReference>
<dbReference type="Reactome" id="R-RNO-975956">
    <property type="pathway name" value="Nonsense Mediated Decay (NMD) independent of the Exon Junction Complex (EJC)"/>
</dbReference>
<dbReference type="Reactome" id="R-RNO-975957">
    <property type="pathway name" value="Nonsense Mediated Decay (NMD) enhanced by the Exon Junction Complex (EJC)"/>
</dbReference>
<dbReference type="PRO" id="PR:P23358"/>
<dbReference type="Proteomes" id="UP000002494">
    <property type="component" value="Chromosome X"/>
</dbReference>
<dbReference type="Bgee" id="ENSRNOG00000028993">
    <property type="expression patterns" value="Expressed in ovary and 19 other cell types or tissues"/>
</dbReference>
<dbReference type="ExpressionAtlas" id="P23358">
    <property type="expression patterns" value="baseline"/>
</dbReference>
<dbReference type="GO" id="GO:0005737">
    <property type="term" value="C:cytoplasm"/>
    <property type="evidence" value="ECO:0000266"/>
    <property type="project" value="RGD"/>
</dbReference>
<dbReference type="GO" id="GO:0022625">
    <property type="term" value="C:cytosolic large ribosomal subunit"/>
    <property type="evidence" value="ECO:0000314"/>
    <property type="project" value="RGD"/>
</dbReference>
<dbReference type="GO" id="GO:0022626">
    <property type="term" value="C:cytosolic ribosome"/>
    <property type="evidence" value="ECO:0000266"/>
    <property type="project" value="RGD"/>
</dbReference>
<dbReference type="GO" id="GO:0005730">
    <property type="term" value="C:nucleolus"/>
    <property type="evidence" value="ECO:0000266"/>
    <property type="project" value="RGD"/>
</dbReference>
<dbReference type="GO" id="GO:0005634">
    <property type="term" value="C:nucleus"/>
    <property type="evidence" value="ECO:0000266"/>
    <property type="project" value="RGD"/>
</dbReference>
<dbReference type="GO" id="GO:0014069">
    <property type="term" value="C:postsynaptic density"/>
    <property type="evidence" value="ECO:0000266"/>
    <property type="project" value="RGD"/>
</dbReference>
<dbReference type="GO" id="GO:0045202">
    <property type="term" value="C:synapse"/>
    <property type="evidence" value="ECO:0000266"/>
    <property type="project" value="RGD"/>
</dbReference>
<dbReference type="GO" id="GO:0070180">
    <property type="term" value="F:large ribosomal subunit rRNA binding"/>
    <property type="evidence" value="ECO:0000314"/>
    <property type="project" value="RGD"/>
</dbReference>
<dbReference type="GO" id="GO:0003735">
    <property type="term" value="F:structural constituent of ribosome"/>
    <property type="evidence" value="ECO:0000266"/>
    <property type="project" value="RGD"/>
</dbReference>
<dbReference type="GO" id="GO:0045901">
    <property type="term" value="P:positive regulation of translational elongation"/>
    <property type="evidence" value="ECO:0000314"/>
    <property type="project" value="RGD"/>
</dbReference>
<dbReference type="GO" id="GO:0006412">
    <property type="term" value="P:translation"/>
    <property type="evidence" value="ECO:0000318"/>
    <property type="project" value="GO_Central"/>
</dbReference>
<dbReference type="CDD" id="cd00349">
    <property type="entry name" value="Ribosomal_L11"/>
    <property type="match status" value="1"/>
</dbReference>
<dbReference type="FunFam" id="1.10.10.250:FF:000002">
    <property type="entry name" value="60S ribosomal protein L12"/>
    <property type="match status" value="1"/>
</dbReference>
<dbReference type="FunFam" id="3.30.1550.10:FF:000002">
    <property type="entry name" value="60S ribosomal protein L12"/>
    <property type="match status" value="1"/>
</dbReference>
<dbReference type="Gene3D" id="1.10.10.250">
    <property type="entry name" value="Ribosomal protein L11, C-terminal domain"/>
    <property type="match status" value="1"/>
</dbReference>
<dbReference type="Gene3D" id="3.30.1550.10">
    <property type="entry name" value="Ribosomal protein L11/L12, N-terminal domain"/>
    <property type="match status" value="1"/>
</dbReference>
<dbReference type="HAMAP" id="MF_00736">
    <property type="entry name" value="Ribosomal_uL11"/>
    <property type="match status" value="1"/>
</dbReference>
<dbReference type="InterPro" id="IPR000911">
    <property type="entry name" value="Ribosomal_uL11"/>
</dbReference>
<dbReference type="InterPro" id="IPR020783">
    <property type="entry name" value="Ribosomal_uL11_C"/>
</dbReference>
<dbReference type="InterPro" id="IPR036769">
    <property type="entry name" value="Ribosomal_uL11_C_sf"/>
</dbReference>
<dbReference type="InterPro" id="IPR020785">
    <property type="entry name" value="Ribosomal_uL11_CS"/>
</dbReference>
<dbReference type="InterPro" id="IPR020784">
    <property type="entry name" value="Ribosomal_uL11_N"/>
</dbReference>
<dbReference type="InterPro" id="IPR036796">
    <property type="entry name" value="Ribosomal_uL11_N_sf"/>
</dbReference>
<dbReference type="PANTHER" id="PTHR11661">
    <property type="entry name" value="60S RIBOSOMAL PROTEIN L12"/>
    <property type="match status" value="1"/>
</dbReference>
<dbReference type="PANTHER" id="PTHR11661:SF2">
    <property type="entry name" value="LARGE RIBOSOMAL SUBUNIT PROTEIN UL11"/>
    <property type="match status" value="1"/>
</dbReference>
<dbReference type="Pfam" id="PF00298">
    <property type="entry name" value="Ribosomal_L11"/>
    <property type="match status" value="1"/>
</dbReference>
<dbReference type="Pfam" id="PF03946">
    <property type="entry name" value="Ribosomal_L11_N"/>
    <property type="match status" value="1"/>
</dbReference>
<dbReference type="SMART" id="SM00649">
    <property type="entry name" value="RL11"/>
    <property type="match status" value="1"/>
</dbReference>
<dbReference type="SUPFAM" id="SSF54747">
    <property type="entry name" value="Ribosomal L11/L12e N-terminal domain"/>
    <property type="match status" value="1"/>
</dbReference>
<dbReference type="SUPFAM" id="SSF46906">
    <property type="entry name" value="Ribosomal protein L11, C-terminal domain"/>
    <property type="match status" value="1"/>
</dbReference>
<dbReference type="PROSITE" id="PS00359">
    <property type="entry name" value="RIBOSOMAL_L11"/>
    <property type="match status" value="1"/>
</dbReference>
<organism>
    <name type="scientific">Rattus norvegicus</name>
    <name type="common">Rat</name>
    <dbReference type="NCBI Taxonomy" id="10116"/>
    <lineage>
        <taxon>Eukaryota</taxon>
        <taxon>Metazoa</taxon>
        <taxon>Chordata</taxon>
        <taxon>Craniata</taxon>
        <taxon>Vertebrata</taxon>
        <taxon>Euteleostomi</taxon>
        <taxon>Mammalia</taxon>
        <taxon>Eutheria</taxon>
        <taxon>Euarchontoglires</taxon>
        <taxon>Glires</taxon>
        <taxon>Rodentia</taxon>
        <taxon>Myomorpha</taxon>
        <taxon>Muroidea</taxon>
        <taxon>Muridae</taxon>
        <taxon>Murinae</taxon>
        <taxon>Rattus</taxon>
    </lineage>
</organism>
<protein>
    <recommendedName>
        <fullName evidence="3">Large ribosomal subunit protein uL11</fullName>
    </recommendedName>
    <alternativeName>
        <fullName>60S ribosomal protein L12</fullName>
    </alternativeName>
</protein>
<evidence type="ECO:0000250" key="1">
    <source>
        <dbReference type="UniProtKB" id="P30050"/>
    </source>
</evidence>
<evidence type="ECO:0000269" key="2">
    <source>
    </source>
</evidence>
<evidence type="ECO:0000305" key="3"/>
<accession>P23358</accession>
<proteinExistence type="evidence at transcript level"/>